<comment type="function">
    <text>Part of the binding-protein-dependent transport system for oligopeptides. Probably responsible for energy coupling to the transport system.</text>
</comment>
<comment type="subcellular location">
    <subcellularLocation>
        <location>Cell membrane</location>
        <topology>Peripheral membrane protein</topology>
    </subcellularLocation>
</comment>
<comment type="similarity">
    <text evidence="2">Belongs to the ABC transporter superfamily.</text>
</comment>
<proteinExistence type="inferred from homology"/>
<sequence>MTKEKNVILTARDIVVEFDVRDKVLTAIRGVSLELVEGEVLALVGESGSGKSVLTKTFTGMLEENGRIAQGSIDYRGQDLTALSSHKDWEQIRGAKIATIFQDPMTSLDPIKTIGSQITEVIVKHQGKTAKEAKELAIDYMNKVGIPDADRRFNEYPFQYSGGMRQRIVIAIALACRPDVLICDEPTTALDVTIQAQIIDLLKSLQNEYHFTTIFITHDLGVVASIADKVAVMYAGEIVEYGTVEEVFYDPRHPYTWSLLSSLPQLADDKGDLYSIPGTPPSLYTDLKGDAFALRSDYAMQIDFEQKAPQFSVSETHWAKTWLLHEDAPKVEKPAVIANLHDKIREKMGFAHLAD</sequence>
<dbReference type="EMBL" id="X17337">
    <property type="protein sequence ID" value="CAA35216.1"/>
    <property type="molecule type" value="Genomic_DNA"/>
</dbReference>
<dbReference type="EMBL" id="AE005672">
    <property type="protein sequence ID" value="AAK75959.1"/>
    <property type="molecule type" value="Genomic_DNA"/>
</dbReference>
<dbReference type="PIR" id="F95220">
    <property type="entry name" value="F95220"/>
</dbReference>
<dbReference type="PIR" id="S11152">
    <property type="entry name" value="S11152"/>
</dbReference>
<dbReference type="RefSeq" id="WP_000159554.1">
    <property type="nucleotide sequence ID" value="NZ_CP155539.1"/>
</dbReference>
<dbReference type="SMR" id="P0A2U8"/>
<dbReference type="PaxDb" id="170187-SP_1888"/>
<dbReference type="EnsemblBacteria" id="AAK75959">
    <property type="protein sequence ID" value="AAK75959"/>
    <property type="gene ID" value="SP_1888"/>
</dbReference>
<dbReference type="KEGG" id="spn:SP_1888"/>
<dbReference type="eggNOG" id="COG0444">
    <property type="taxonomic scope" value="Bacteria"/>
</dbReference>
<dbReference type="PhylomeDB" id="P0A2U8"/>
<dbReference type="BioCyc" id="SPNE170187:G1FZB-1918-MONOMER"/>
<dbReference type="Proteomes" id="UP000000585">
    <property type="component" value="Chromosome"/>
</dbReference>
<dbReference type="GO" id="GO:0005886">
    <property type="term" value="C:plasma membrane"/>
    <property type="evidence" value="ECO:0007669"/>
    <property type="project" value="UniProtKB-SubCell"/>
</dbReference>
<dbReference type="GO" id="GO:0005524">
    <property type="term" value="F:ATP binding"/>
    <property type="evidence" value="ECO:0007669"/>
    <property type="project" value="UniProtKB-KW"/>
</dbReference>
<dbReference type="GO" id="GO:0016887">
    <property type="term" value="F:ATP hydrolysis activity"/>
    <property type="evidence" value="ECO:0007669"/>
    <property type="project" value="InterPro"/>
</dbReference>
<dbReference type="GO" id="GO:0015833">
    <property type="term" value="P:peptide transport"/>
    <property type="evidence" value="ECO:0007669"/>
    <property type="project" value="UniProtKB-KW"/>
</dbReference>
<dbReference type="GO" id="GO:0015031">
    <property type="term" value="P:protein transport"/>
    <property type="evidence" value="ECO:0007669"/>
    <property type="project" value="UniProtKB-KW"/>
</dbReference>
<dbReference type="CDD" id="cd03257">
    <property type="entry name" value="ABC_NikE_OppD_transporters"/>
    <property type="match status" value="1"/>
</dbReference>
<dbReference type="FunFam" id="3.40.50.300:FF:000016">
    <property type="entry name" value="Oligopeptide ABC transporter ATP-binding component"/>
    <property type="match status" value="1"/>
</dbReference>
<dbReference type="Gene3D" id="3.40.50.300">
    <property type="entry name" value="P-loop containing nucleotide triphosphate hydrolases"/>
    <property type="match status" value="1"/>
</dbReference>
<dbReference type="InterPro" id="IPR003593">
    <property type="entry name" value="AAA+_ATPase"/>
</dbReference>
<dbReference type="InterPro" id="IPR050388">
    <property type="entry name" value="ABC_Ni/Peptide_Import"/>
</dbReference>
<dbReference type="InterPro" id="IPR003439">
    <property type="entry name" value="ABC_transporter-like_ATP-bd"/>
</dbReference>
<dbReference type="InterPro" id="IPR017871">
    <property type="entry name" value="ABC_transporter-like_CS"/>
</dbReference>
<dbReference type="InterPro" id="IPR013563">
    <property type="entry name" value="Oligopep_ABC_C"/>
</dbReference>
<dbReference type="InterPro" id="IPR027417">
    <property type="entry name" value="P-loop_NTPase"/>
</dbReference>
<dbReference type="NCBIfam" id="TIGR01727">
    <property type="entry name" value="oligo_HPY"/>
    <property type="match status" value="1"/>
</dbReference>
<dbReference type="PANTHER" id="PTHR43297:SF2">
    <property type="entry name" value="DIPEPTIDE TRANSPORT ATP-BINDING PROTEIN DPPD"/>
    <property type="match status" value="1"/>
</dbReference>
<dbReference type="PANTHER" id="PTHR43297">
    <property type="entry name" value="OLIGOPEPTIDE TRANSPORT ATP-BINDING PROTEIN APPD"/>
    <property type="match status" value="1"/>
</dbReference>
<dbReference type="Pfam" id="PF00005">
    <property type="entry name" value="ABC_tran"/>
    <property type="match status" value="1"/>
</dbReference>
<dbReference type="Pfam" id="PF08352">
    <property type="entry name" value="oligo_HPY"/>
    <property type="match status" value="1"/>
</dbReference>
<dbReference type="SMART" id="SM00382">
    <property type="entry name" value="AAA"/>
    <property type="match status" value="1"/>
</dbReference>
<dbReference type="SUPFAM" id="SSF52540">
    <property type="entry name" value="P-loop containing nucleoside triphosphate hydrolases"/>
    <property type="match status" value="1"/>
</dbReference>
<dbReference type="PROSITE" id="PS00211">
    <property type="entry name" value="ABC_TRANSPORTER_1"/>
    <property type="match status" value="1"/>
</dbReference>
<dbReference type="PROSITE" id="PS50893">
    <property type="entry name" value="ABC_TRANSPORTER_2"/>
    <property type="match status" value="1"/>
</dbReference>
<keyword id="KW-0067">ATP-binding</keyword>
<keyword id="KW-1003">Cell membrane</keyword>
<keyword id="KW-0472">Membrane</keyword>
<keyword id="KW-0547">Nucleotide-binding</keyword>
<keyword id="KW-0571">Peptide transport</keyword>
<keyword id="KW-0653">Protein transport</keyword>
<keyword id="KW-1185">Reference proteome</keyword>
<keyword id="KW-0813">Transport</keyword>
<reference key="1">
    <citation type="journal article" date="1990" name="Mol. Microbiol.">
        <title>The ami locus of the Gram-positive bacterium Streptococcus pneumoniae is similar to binding protein-dependent transport operons of Gram-negative bacteria.</title>
        <authorList>
            <person name="Alloing G."/>
            <person name="Trombe M.C."/>
            <person name="Claverys J.-P."/>
        </authorList>
    </citation>
    <scope>NUCLEOTIDE SEQUENCE [GENOMIC DNA]</scope>
    <source>
        <strain>R6 / R800</strain>
    </source>
</reference>
<reference key="2">
    <citation type="journal article" date="2001" name="Science">
        <title>Complete genome sequence of a virulent isolate of Streptococcus pneumoniae.</title>
        <authorList>
            <person name="Tettelin H."/>
            <person name="Nelson K.E."/>
            <person name="Paulsen I.T."/>
            <person name="Eisen J.A."/>
            <person name="Read T.D."/>
            <person name="Peterson S.N."/>
            <person name="Heidelberg J.F."/>
            <person name="DeBoy R.T."/>
            <person name="Haft D.H."/>
            <person name="Dodson R.J."/>
            <person name="Durkin A.S."/>
            <person name="Gwinn M.L."/>
            <person name="Kolonay J.F."/>
            <person name="Nelson W.C."/>
            <person name="Peterson J.D."/>
            <person name="Umayam L.A."/>
            <person name="White O."/>
            <person name="Salzberg S.L."/>
            <person name="Lewis M.R."/>
            <person name="Radune D."/>
            <person name="Holtzapple E.K."/>
            <person name="Khouri H.M."/>
            <person name="Wolf A.M."/>
            <person name="Utterback T.R."/>
            <person name="Hansen C.L."/>
            <person name="McDonald L.A."/>
            <person name="Feldblyum T.V."/>
            <person name="Angiuoli S.V."/>
            <person name="Dickinson T."/>
            <person name="Hickey E.K."/>
            <person name="Holt I.E."/>
            <person name="Loftus B.J."/>
            <person name="Yang F."/>
            <person name="Smith H.O."/>
            <person name="Venter J.C."/>
            <person name="Dougherty B.A."/>
            <person name="Morrison D.A."/>
            <person name="Hollingshead S.K."/>
            <person name="Fraser C.M."/>
        </authorList>
    </citation>
    <scope>NUCLEOTIDE SEQUENCE [LARGE SCALE GENOMIC DNA]</scope>
    <source>
        <strain>ATCC BAA-334 / TIGR4</strain>
    </source>
</reference>
<gene>
    <name type="primary">amiE</name>
    <name type="ordered locus">SP_1888</name>
</gene>
<protein>
    <recommendedName>
        <fullName>Oligopeptide transport ATP-binding protein AmiE</fullName>
    </recommendedName>
</protein>
<feature type="chain" id="PRO_0000091927" description="Oligopeptide transport ATP-binding protein AmiE">
    <location>
        <begin position="1"/>
        <end position="355"/>
    </location>
</feature>
<feature type="domain" description="ABC transporter" evidence="1">
    <location>
        <begin position="9"/>
        <end position="260"/>
    </location>
</feature>
<feature type="binding site" evidence="1">
    <location>
        <begin position="45"/>
        <end position="52"/>
    </location>
    <ligand>
        <name>ATP</name>
        <dbReference type="ChEBI" id="CHEBI:30616"/>
    </ligand>
</feature>
<feature type="sequence conflict" description="In Ref. 1; CAA35216." evidence="2" ref="1">
    <original>T</original>
    <variation>R</variation>
    <location>
        <position position="59"/>
    </location>
</feature>
<feature type="sequence conflict" description="In Ref. 1; CAA35216." evidence="2" ref="1">
    <original>Q</original>
    <variation>E</variation>
    <location>
        <position position="70"/>
    </location>
</feature>
<evidence type="ECO:0000255" key="1">
    <source>
        <dbReference type="PROSITE-ProRule" id="PRU00434"/>
    </source>
</evidence>
<evidence type="ECO:0000305" key="2"/>
<name>AMIE_STRPN</name>
<organism>
    <name type="scientific">Streptococcus pneumoniae serotype 4 (strain ATCC BAA-334 / TIGR4)</name>
    <dbReference type="NCBI Taxonomy" id="170187"/>
    <lineage>
        <taxon>Bacteria</taxon>
        <taxon>Bacillati</taxon>
        <taxon>Bacillota</taxon>
        <taxon>Bacilli</taxon>
        <taxon>Lactobacillales</taxon>
        <taxon>Streptococcaceae</taxon>
        <taxon>Streptococcus</taxon>
    </lineage>
</organism>
<accession>P0A2U8</accession>
<accession>P18765</accession>